<comment type="similarity">
    <text evidence="1">Belongs to the bacterial ribosomal protein bS21 family.</text>
</comment>
<organism>
    <name type="scientific">Francisella tularensis subsp. holarctica (strain LVS)</name>
    <dbReference type="NCBI Taxonomy" id="376619"/>
    <lineage>
        <taxon>Bacteria</taxon>
        <taxon>Pseudomonadati</taxon>
        <taxon>Pseudomonadota</taxon>
        <taxon>Gammaproteobacteria</taxon>
        <taxon>Thiotrichales</taxon>
        <taxon>Francisellaceae</taxon>
        <taxon>Francisella</taxon>
    </lineage>
</organism>
<evidence type="ECO:0000255" key="1">
    <source>
        <dbReference type="HAMAP-Rule" id="MF_00358"/>
    </source>
</evidence>
<evidence type="ECO:0000256" key="2">
    <source>
        <dbReference type="SAM" id="MobiDB-lite"/>
    </source>
</evidence>
<evidence type="ECO:0000305" key="3"/>
<sequence>MPRIIVDPKKPFDISLRNFKRACEKAGIKQELRDRQHYVKPTQKRKIAKKAAISKAKKEARRSYSY</sequence>
<proteinExistence type="inferred from homology"/>
<accession>Q2A2N1</accession>
<protein>
    <recommendedName>
        <fullName evidence="1">Small ribosomal subunit protein bS21C</fullName>
    </recommendedName>
    <alternativeName>
        <fullName evidence="3">30S ribosomal protein S21 3</fullName>
    </alternativeName>
</protein>
<feature type="chain" id="PRO_0000266670" description="Small ribosomal subunit protein bS21C">
    <location>
        <begin position="1"/>
        <end position="66"/>
    </location>
</feature>
<feature type="region of interest" description="Disordered" evidence="2">
    <location>
        <begin position="38"/>
        <end position="66"/>
    </location>
</feature>
<dbReference type="EMBL" id="AM233362">
    <property type="protein sequence ID" value="CAJ79799.1"/>
    <property type="molecule type" value="Genomic_DNA"/>
</dbReference>
<dbReference type="SMR" id="Q2A2N1"/>
<dbReference type="KEGG" id="ftl:FTL_1360"/>
<dbReference type="Proteomes" id="UP000001944">
    <property type="component" value="Chromosome"/>
</dbReference>
<dbReference type="GO" id="GO:1990904">
    <property type="term" value="C:ribonucleoprotein complex"/>
    <property type="evidence" value="ECO:0007669"/>
    <property type="project" value="UniProtKB-KW"/>
</dbReference>
<dbReference type="GO" id="GO:0005840">
    <property type="term" value="C:ribosome"/>
    <property type="evidence" value="ECO:0007669"/>
    <property type="project" value="UniProtKB-KW"/>
</dbReference>
<dbReference type="GO" id="GO:0003735">
    <property type="term" value="F:structural constituent of ribosome"/>
    <property type="evidence" value="ECO:0007669"/>
    <property type="project" value="InterPro"/>
</dbReference>
<dbReference type="GO" id="GO:0006412">
    <property type="term" value="P:translation"/>
    <property type="evidence" value="ECO:0007669"/>
    <property type="project" value="UniProtKB-UniRule"/>
</dbReference>
<dbReference type="Gene3D" id="1.20.5.1150">
    <property type="entry name" value="Ribosomal protein S8"/>
    <property type="match status" value="1"/>
</dbReference>
<dbReference type="HAMAP" id="MF_00358">
    <property type="entry name" value="Ribosomal_bS21"/>
    <property type="match status" value="1"/>
</dbReference>
<dbReference type="InterPro" id="IPR001911">
    <property type="entry name" value="Ribosomal_bS21"/>
</dbReference>
<dbReference type="InterPro" id="IPR038380">
    <property type="entry name" value="Ribosomal_bS21_sf"/>
</dbReference>
<dbReference type="NCBIfam" id="TIGR00030">
    <property type="entry name" value="S21p"/>
    <property type="match status" value="1"/>
</dbReference>
<dbReference type="Pfam" id="PF01165">
    <property type="entry name" value="Ribosomal_S21"/>
    <property type="match status" value="1"/>
</dbReference>
<dbReference type="PRINTS" id="PR00976">
    <property type="entry name" value="RIBOSOMALS21"/>
</dbReference>
<gene>
    <name evidence="1" type="primary">rpsU3</name>
    <name type="ordered locus">FTL_1360</name>
</gene>
<keyword id="KW-1185">Reference proteome</keyword>
<keyword id="KW-0687">Ribonucleoprotein</keyword>
<keyword id="KW-0689">Ribosomal protein</keyword>
<name>RS213_FRATH</name>
<reference key="1">
    <citation type="submission" date="2006-03" db="EMBL/GenBank/DDBJ databases">
        <title>Complete genome sequence of Francisella tularensis LVS (Live Vaccine Strain).</title>
        <authorList>
            <person name="Chain P."/>
            <person name="Larimer F."/>
            <person name="Land M."/>
            <person name="Stilwagen S."/>
            <person name="Larsson P."/>
            <person name="Bearden S."/>
            <person name="Chu M."/>
            <person name="Oyston P."/>
            <person name="Forsman M."/>
            <person name="Andersson S."/>
            <person name="Lindler L."/>
            <person name="Titball R."/>
            <person name="Garcia E."/>
        </authorList>
    </citation>
    <scope>NUCLEOTIDE SEQUENCE [LARGE SCALE GENOMIC DNA]</scope>
    <source>
        <strain>LVS</strain>
    </source>
</reference>